<name>PURQ_LACLC</name>
<gene>
    <name evidence="1" type="primary">purQ</name>
</gene>
<sequence>MKFAVIQFPGSNCDFDLLWAIRDVMGAEAEFVWHDEKSLAGFDGVLIPGGFSYGDYLRCGAIASFANIMPEIKRLAKEGKPVFGTCNGFQILVESGLLPGVLIRNEGLKFVSKWQVLKVENNQSNFTTEYAKDALINLPIAHGEGQYVADEATLAELKENGQIVFTYADENPNGSVENIAGIINKEGNVLGMMPHPERAMEELLGGADGRKMFASLLKNFLVTVKN</sequence>
<keyword id="KW-0067">ATP-binding</keyword>
<keyword id="KW-0963">Cytoplasm</keyword>
<keyword id="KW-0315">Glutamine amidotransferase</keyword>
<keyword id="KW-0378">Hydrolase</keyword>
<keyword id="KW-0436">Ligase</keyword>
<keyword id="KW-0547">Nucleotide-binding</keyword>
<keyword id="KW-0658">Purine biosynthesis</keyword>
<proteinExistence type="inferred from homology"/>
<comment type="function">
    <text evidence="1">Part of the phosphoribosylformylglycinamidine synthase complex involved in the purines biosynthetic pathway. Catalyzes the ATP-dependent conversion of formylglycinamide ribonucleotide (FGAR) and glutamine to yield formylglycinamidine ribonucleotide (FGAM) and glutamate. The FGAM synthase complex is composed of three subunits. PurQ produces an ammonia molecule by converting glutamine to glutamate. PurL transfers the ammonia molecule to FGAR to form FGAM in an ATP-dependent manner. PurS interacts with PurQ and PurL and is thought to assist in the transfer of the ammonia molecule from PurQ to PurL.</text>
</comment>
<comment type="catalytic activity">
    <reaction evidence="1">
        <text>N(2)-formyl-N(1)-(5-phospho-beta-D-ribosyl)glycinamide + L-glutamine + ATP + H2O = 2-formamido-N(1)-(5-O-phospho-beta-D-ribosyl)acetamidine + L-glutamate + ADP + phosphate + H(+)</text>
        <dbReference type="Rhea" id="RHEA:17129"/>
        <dbReference type="ChEBI" id="CHEBI:15377"/>
        <dbReference type="ChEBI" id="CHEBI:15378"/>
        <dbReference type="ChEBI" id="CHEBI:29985"/>
        <dbReference type="ChEBI" id="CHEBI:30616"/>
        <dbReference type="ChEBI" id="CHEBI:43474"/>
        <dbReference type="ChEBI" id="CHEBI:58359"/>
        <dbReference type="ChEBI" id="CHEBI:147286"/>
        <dbReference type="ChEBI" id="CHEBI:147287"/>
        <dbReference type="ChEBI" id="CHEBI:456216"/>
        <dbReference type="EC" id="6.3.5.3"/>
    </reaction>
</comment>
<comment type="catalytic activity">
    <reaction evidence="1">
        <text>L-glutamine + H2O = L-glutamate + NH4(+)</text>
        <dbReference type="Rhea" id="RHEA:15889"/>
        <dbReference type="ChEBI" id="CHEBI:15377"/>
        <dbReference type="ChEBI" id="CHEBI:28938"/>
        <dbReference type="ChEBI" id="CHEBI:29985"/>
        <dbReference type="ChEBI" id="CHEBI:58359"/>
        <dbReference type="EC" id="3.5.1.2"/>
    </reaction>
</comment>
<comment type="pathway">
    <text evidence="1">Purine metabolism; IMP biosynthesis via de novo pathway; 5-amino-1-(5-phospho-D-ribosyl)imidazole from N(2)-formyl-N(1)-(5-phospho-D-ribosyl)glycinamide: step 1/2.</text>
</comment>
<comment type="subunit">
    <text evidence="1">Part of the FGAM synthase complex composed of 1 PurL, 1 PurQ and 2 PurS subunits.</text>
</comment>
<comment type="subcellular location">
    <subcellularLocation>
        <location evidence="1">Cytoplasm</location>
    </subcellularLocation>
</comment>
<organism>
    <name type="scientific">Lactococcus lactis subsp. cremoris</name>
    <name type="common">Streptococcus cremoris</name>
    <dbReference type="NCBI Taxonomy" id="1359"/>
    <lineage>
        <taxon>Bacteria</taxon>
        <taxon>Bacillati</taxon>
        <taxon>Bacillota</taxon>
        <taxon>Bacilli</taxon>
        <taxon>Lactobacillales</taxon>
        <taxon>Streptococcaceae</taxon>
        <taxon>Lactococcus</taxon>
    </lineage>
</organism>
<dbReference type="EC" id="6.3.5.3" evidence="1"/>
<dbReference type="EC" id="3.5.1.2" evidence="1"/>
<dbReference type="EMBL" id="U64311">
    <property type="protein sequence ID" value="AAD12625.1"/>
    <property type="molecule type" value="Genomic_DNA"/>
</dbReference>
<dbReference type="PIR" id="T51700">
    <property type="entry name" value="T51700"/>
</dbReference>
<dbReference type="RefSeq" id="WP_011834913.1">
    <property type="nucleotide sequence ID" value="NZ_RIMN01000085.1"/>
</dbReference>
<dbReference type="SMR" id="Q9ZB07"/>
<dbReference type="OMA" id="SNCDHDC"/>
<dbReference type="UniPathway" id="UPA00074">
    <property type="reaction ID" value="UER00128"/>
</dbReference>
<dbReference type="GO" id="GO:0005737">
    <property type="term" value="C:cytoplasm"/>
    <property type="evidence" value="ECO:0007669"/>
    <property type="project" value="UniProtKB-SubCell"/>
</dbReference>
<dbReference type="GO" id="GO:0005524">
    <property type="term" value="F:ATP binding"/>
    <property type="evidence" value="ECO:0007669"/>
    <property type="project" value="UniProtKB-KW"/>
</dbReference>
<dbReference type="GO" id="GO:0004359">
    <property type="term" value="F:glutaminase activity"/>
    <property type="evidence" value="ECO:0007669"/>
    <property type="project" value="UniProtKB-EC"/>
</dbReference>
<dbReference type="GO" id="GO:0004642">
    <property type="term" value="F:phosphoribosylformylglycinamidine synthase activity"/>
    <property type="evidence" value="ECO:0007669"/>
    <property type="project" value="UniProtKB-UniRule"/>
</dbReference>
<dbReference type="GO" id="GO:0006189">
    <property type="term" value="P:'de novo' IMP biosynthetic process"/>
    <property type="evidence" value="ECO:0007669"/>
    <property type="project" value="UniProtKB-UniRule"/>
</dbReference>
<dbReference type="CDD" id="cd01740">
    <property type="entry name" value="GATase1_FGAR_AT"/>
    <property type="match status" value="1"/>
</dbReference>
<dbReference type="FunFam" id="3.40.50.880:FF:000019">
    <property type="entry name" value="Phosphoribosylformylglycinamidine synthase subunit PurQ"/>
    <property type="match status" value="1"/>
</dbReference>
<dbReference type="Gene3D" id="3.40.50.880">
    <property type="match status" value="1"/>
</dbReference>
<dbReference type="HAMAP" id="MF_00421">
    <property type="entry name" value="PurQ"/>
    <property type="match status" value="1"/>
</dbReference>
<dbReference type="InterPro" id="IPR029062">
    <property type="entry name" value="Class_I_gatase-like"/>
</dbReference>
<dbReference type="InterPro" id="IPR010075">
    <property type="entry name" value="PRibForGlyAmidine_synth_PurQ"/>
</dbReference>
<dbReference type="NCBIfam" id="TIGR01737">
    <property type="entry name" value="FGAM_synth_I"/>
    <property type="match status" value="1"/>
</dbReference>
<dbReference type="NCBIfam" id="NF002957">
    <property type="entry name" value="PRK03619.1"/>
    <property type="match status" value="1"/>
</dbReference>
<dbReference type="PANTHER" id="PTHR47552">
    <property type="entry name" value="PHOSPHORIBOSYLFORMYLGLYCINAMIDINE SYNTHASE SUBUNIT PURQ"/>
    <property type="match status" value="1"/>
</dbReference>
<dbReference type="PANTHER" id="PTHR47552:SF1">
    <property type="entry name" value="PHOSPHORIBOSYLFORMYLGLYCINAMIDINE SYNTHASE SUBUNIT PURQ"/>
    <property type="match status" value="1"/>
</dbReference>
<dbReference type="Pfam" id="PF13507">
    <property type="entry name" value="GATase_5"/>
    <property type="match status" value="1"/>
</dbReference>
<dbReference type="PIRSF" id="PIRSF001586">
    <property type="entry name" value="FGAM_synth_I"/>
    <property type="match status" value="1"/>
</dbReference>
<dbReference type="SMART" id="SM01211">
    <property type="entry name" value="GATase_5"/>
    <property type="match status" value="1"/>
</dbReference>
<dbReference type="SUPFAM" id="SSF52317">
    <property type="entry name" value="Class I glutamine amidotransferase-like"/>
    <property type="match status" value="1"/>
</dbReference>
<dbReference type="PROSITE" id="PS51273">
    <property type="entry name" value="GATASE_TYPE_1"/>
    <property type="match status" value="1"/>
</dbReference>
<reference key="1">
    <citation type="journal article" date="1999" name="Mol. Gen. Genet.">
        <title>Isolation and characterization of a purC(orf)QLF operon from Lactococcus lactis MG1614.</title>
        <authorList>
            <person name="Peltonen T."/>
            <person name="Mantasala P."/>
        </authorList>
    </citation>
    <scope>NUCLEOTIDE SEQUENCE [GENOMIC DNA]</scope>
    <source>
        <strain>MG1614</strain>
    </source>
</reference>
<accession>Q9ZB07</accession>
<feature type="chain" id="PRO_0000100561" description="Phosphoribosylformylglycinamidine synthase subunit PurQ">
    <location>
        <begin position="1"/>
        <end position="226"/>
    </location>
</feature>
<feature type="domain" description="Glutamine amidotransferase type-1" evidence="1">
    <location>
        <begin position="2"/>
        <end position="226"/>
    </location>
</feature>
<feature type="active site" description="Nucleophile" evidence="1">
    <location>
        <position position="86"/>
    </location>
</feature>
<feature type="active site" evidence="1">
    <location>
        <position position="195"/>
    </location>
</feature>
<feature type="active site" evidence="1">
    <location>
        <position position="197"/>
    </location>
</feature>
<evidence type="ECO:0000255" key="1">
    <source>
        <dbReference type="HAMAP-Rule" id="MF_00421"/>
    </source>
</evidence>
<protein>
    <recommendedName>
        <fullName evidence="1">Phosphoribosylformylglycinamidine synthase subunit PurQ</fullName>
        <shortName evidence="1">FGAM synthase</shortName>
        <ecNumber evidence="1">6.3.5.3</ecNumber>
    </recommendedName>
    <alternativeName>
        <fullName evidence="1">Formylglycinamide ribonucleotide amidotransferase subunit I</fullName>
        <shortName evidence="1">FGAR amidotransferase I</shortName>
        <shortName evidence="1">FGAR-AT I</shortName>
    </alternativeName>
    <alternativeName>
        <fullName evidence="1">Glutaminase PurQ</fullName>
        <ecNumber evidence="1">3.5.1.2</ecNumber>
    </alternativeName>
    <alternativeName>
        <fullName evidence="1">Phosphoribosylformylglycinamidine synthase subunit I</fullName>
    </alternativeName>
</protein>